<gene>
    <name type="primary">ATG3</name>
    <name type="synonym">APG3</name>
    <name type="synonym">AUT1</name>
    <name type="ordered locus">YNR007C</name>
    <name type="ORF">N2040</name>
</gene>
<protein>
    <recommendedName>
        <fullName>Autophagy-related protein 3</fullName>
    </recommendedName>
    <alternativeName>
        <fullName>Autophagy-related E2-like conjugation enzyme ATG3</fullName>
    </alternativeName>
</protein>
<dbReference type="EMBL" id="X77395">
    <property type="protein sequence ID" value="CAA54575.1"/>
    <property type="molecule type" value="Genomic_DNA"/>
</dbReference>
<dbReference type="EMBL" id="Z71622">
    <property type="protein sequence ID" value="CAA96284.1"/>
    <property type="molecule type" value="Genomic_DNA"/>
</dbReference>
<dbReference type="EMBL" id="BK006947">
    <property type="protein sequence ID" value="DAA10548.1"/>
    <property type="molecule type" value="Genomic_DNA"/>
</dbReference>
<dbReference type="PIR" id="S45130">
    <property type="entry name" value="S45130"/>
</dbReference>
<dbReference type="RefSeq" id="NP_014404.3">
    <property type="nucleotide sequence ID" value="NM_001183184.3"/>
</dbReference>
<dbReference type="PDB" id="2DYT">
    <property type="method" value="X-ray"/>
    <property type="resolution" value="2.50 A"/>
    <property type="chains" value="A=1-310"/>
</dbReference>
<dbReference type="PDB" id="3T7G">
    <property type="method" value="X-ray"/>
    <property type="resolution" value="2.08 A"/>
    <property type="chains" value="C/D=128-144"/>
</dbReference>
<dbReference type="PDB" id="4GSL">
    <property type="method" value="X-ray"/>
    <property type="resolution" value="2.70 A"/>
    <property type="chains" value="C/D=1-310"/>
</dbReference>
<dbReference type="PDB" id="6OJJ">
    <property type="method" value="X-ray"/>
    <property type="resolution" value="2.41 A"/>
    <property type="chains" value="A=19-310"/>
</dbReference>
<dbReference type="PDBsum" id="2DYT"/>
<dbReference type="PDBsum" id="3T7G"/>
<dbReference type="PDBsum" id="4GSL"/>
<dbReference type="PDBsum" id="6OJJ"/>
<dbReference type="SMR" id="P40344"/>
<dbReference type="BioGRID" id="35832">
    <property type="interactions" value="332"/>
</dbReference>
<dbReference type="DIP" id="DIP-1190N"/>
<dbReference type="ELM" id="P40344"/>
<dbReference type="FunCoup" id="P40344">
    <property type="interactions" value="1246"/>
</dbReference>
<dbReference type="IntAct" id="P40344">
    <property type="interactions" value="13"/>
</dbReference>
<dbReference type="MINT" id="P40344"/>
<dbReference type="STRING" id="4932.YNR007C"/>
<dbReference type="iPTMnet" id="P40344"/>
<dbReference type="PaxDb" id="4932-YNR007C"/>
<dbReference type="PeptideAtlas" id="P40344"/>
<dbReference type="EnsemblFungi" id="YNR007C_mRNA">
    <property type="protein sequence ID" value="YNR007C"/>
    <property type="gene ID" value="YNR007C"/>
</dbReference>
<dbReference type="GeneID" id="855741"/>
<dbReference type="KEGG" id="sce:YNR007C"/>
<dbReference type="AGR" id="SGD:S000005290"/>
<dbReference type="SGD" id="S000005290">
    <property type="gene designation" value="ATG3"/>
</dbReference>
<dbReference type="VEuPathDB" id="FungiDB:YNR007C"/>
<dbReference type="eggNOG" id="KOG2981">
    <property type="taxonomic scope" value="Eukaryota"/>
</dbReference>
<dbReference type="GeneTree" id="ENSGT00390000010308"/>
<dbReference type="HOGENOM" id="CLU_027518_2_0_1"/>
<dbReference type="InParanoid" id="P40344"/>
<dbReference type="OMA" id="HCPTWSW"/>
<dbReference type="OrthoDB" id="1584384at2759"/>
<dbReference type="BioCyc" id="YEAST:G3O-33325-MONOMER"/>
<dbReference type="Reactome" id="R-SCE-1632852">
    <property type="pathway name" value="Macroautophagy"/>
</dbReference>
<dbReference type="BioGRID-ORCS" id="855741">
    <property type="hits" value="0 hits in 10 CRISPR screens"/>
</dbReference>
<dbReference type="EvolutionaryTrace" id="P40344"/>
<dbReference type="PRO" id="PR:P40344"/>
<dbReference type="Proteomes" id="UP000002311">
    <property type="component" value="Chromosome XIV"/>
</dbReference>
<dbReference type="RNAct" id="P40344">
    <property type="molecule type" value="protein"/>
</dbReference>
<dbReference type="GO" id="GO:0005737">
    <property type="term" value="C:cytoplasm"/>
    <property type="evidence" value="ECO:0007005"/>
    <property type="project" value="SGD"/>
</dbReference>
<dbReference type="GO" id="GO:0005829">
    <property type="term" value="C:cytosol"/>
    <property type="evidence" value="ECO:0000314"/>
    <property type="project" value="UniProtKB"/>
</dbReference>
<dbReference type="GO" id="GO:0005739">
    <property type="term" value="C:mitochondrion"/>
    <property type="evidence" value="ECO:0000314"/>
    <property type="project" value="UniProtKB"/>
</dbReference>
<dbReference type="GO" id="GO:0061908">
    <property type="term" value="C:phagophore"/>
    <property type="evidence" value="ECO:0000314"/>
    <property type="project" value="SGD"/>
</dbReference>
<dbReference type="GO" id="GO:0000407">
    <property type="term" value="C:phagophore assembly site"/>
    <property type="evidence" value="ECO:0000314"/>
    <property type="project" value="SGD"/>
</dbReference>
<dbReference type="GO" id="GO:0141046">
    <property type="term" value="F:Atg8-family conjugating enzyme activity"/>
    <property type="evidence" value="ECO:0000318"/>
    <property type="project" value="GO_Central"/>
</dbReference>
<dbReference type="GO" id="GO:0019776">
    <property type="term" value="F:Atg8-family ligase activity"/>
    <property type="evidence" value="ECO:0000315"/>
    <property type="project" value="SGD"/>
</dbReference>
<dbReference type="GO" id="GO:0000045">
    <property type="term" value="P:autophagosome assembly"/>
    <property type="evidence" value="ECO:0000315"/>
    <property type="project" value="UniProtKB"/>
</dbReference>
<dbReference type="GO" id="GO:0000422">
    <property type="term" value="P:autophagy of mitochondrion"/>
    <property type="evidence" value="ECO:0000315"/>
    <property type="project" value="SGD"/>
</dbReference>
<dbReference type="GO" id="GO:0032258">
    <property type="term" value="P:cytoplasm to vacuole targeting by the Cvt pathway"/>
    <property type="evidence" value="ECO:0000315"/>
    <property type="project" value="SGD"/>
</dbReference>
<dbReference type="GO" id="GO:0061723">
    <property type="term" value="P:glycophagy"/>
    <property type="evidence" value="ECO:0000318"/>
    <property type="project" value="GO_Central"/>
</dbReference>
<dbReference type="GO" id="GO:0044804">
    <property type="term" value="P:nucleophagy"/>
    <property type="evidence" value="ECO:0000315"/>
    <property type="project" value="SGD"/>
</dbReference>
<dbReference type="GO" id="GO:0034727">
    <property type="term" value="P:piecemeal microautophagy of the nucleus"/>
    <property type="evidence" value="ECO:0000315"/>
    <property type="project" value="SGD"/>
</dbReference>
<dbReference type="GO" id="GO:0006612">
    <property type="term" value="P:protein targeting to membrane"/>
    <property type="evidence" value="ECO:0000315"/>
    <property type="project" value="UniProtKB"/>
</dbReference>
<dbReference type="DisProt" id="DP02826"/>
<dbReference type="Gene3D" id="3.30.1460.50">
    <property type="match status" value="1"/>
</dbReference>
<dbReference type="InterPro" id="IPR007135">
    <property type="entry name" value="Atg3/Atg10"/>
</dbReference>
<dbReference type="PANTHER" id="PTHR12866">
    <property type="entry name" value="UBIQUITIN-LIKE-CONJUGATING ENZYME ATG3"/>
    <property type="match status" value="1"/>
</dbReference>
<dbReference type="PANTHER" id="PTHR12866:SF2">
    <property type="entry name" value="UBIQUITIN-LIKE-CONJUGATING ENZYME ATG3"/>
    <property type="match status" value="1"/>
</dbReference>
<dbReference type="Pfam" id="PF03987">
    <property type="entry name" value="Autophagy_act_C"/>
    <property type="match status" value="1"/>
</dbReference>
<sequence>MIRSTLSSWREYLTPITHKSTFLTTGQITPEEFVQAGDYLCHMFPTWKWNEESSDISYRDFLPKNKQFLIIRKVPCDKRAEQCVEVEGPDVIMKGFAEDGDEDDVLEYIGSETEHVQSTPAGGTKDSSIDDIDELIQDMEIKEEDENDDTEEFNAKGGLAKDMAQERYYDLYIAYSTSYRVPKMYIVGFNSNGSPLSPEQMFEDISADYRTKTATIEKLPFYKNSVLSVSIHPCKHANVMKILLDKVRVVRQRRRKELQEEQELDGVGDWEDLQDDIDDSLRVDQYLIVFLKFITSVTPSIQHDYTMEGW</sequence>
<feature type="chain" id="PRO_0000213586" description="Autophagy-related protein 3">
    <location>
        <begin position="1"/>
        <end position="310"/>
    </location>
</feature>
<feature type="region of interest" description="Flexible region">
    <location>
        <begin position="83"/>
        <end position="163"/>
    </location>
</feature>
<feature type="region of interest" description="Handle region">
    <location>
        <begin position="238"/>
        <end position="285"/>
    </location>
</feature>
<feature type="short sequence motif" description="ATG8 interaction motif (AIM)">
    <location>
        <begin position="270"/>
        <end position="273"/>
    </location>
</feature>
<feature type="active site" description="Glycyl thioester intermediate" evidence="1">
    <location>
        <position position="234"/>
    </location>
</feature>
<feature type="binding site">
    <location>
        <begin position="1"/>
        <end position="7"/>
    </location>
    <ligand>
        <name>a 1,2-diacylglycero-3-phosphoethanolamine</name>
        <dbReference type="ChEBI" id="CHEBI:57613"/>
    </ligand>
</feature>
<feature type="modified residue" description="N6-acetyllysine; by ESA1" evidence="27">
    <location>
        <position position="19"/>
    </location>
</feature>
<feature type="modified residue" description="N6-acetyllysine; by ESA1" evidence="27">
    <location>
        <position position="48"/>
    </location>
</feature>
<feature type="mutagenesis site" description="Decreases ATG8-PE comjugation and autophagy." evidence="30">
    <original>T</original>
    <variation>A</variation>
    <location>
        <position position="213"/>
    </location>
</feature>
<feature type="mutagenesis site" description="Loss of interaction with ATG8 and defect in autophagy and Cvt pathway." evidence="3 10">
    <original>C</original>
    <variation>A</variation>
    <location>
        <position position="234"/>
    </location>
</feature>
<feature type="mutagenesis site" description="Instead of the formation of an intermediate complex with a thiol ester bond between ATG3 (E2-like enzyme) and ATG8 (substrate), a stable complex with an O-ester bond is formed." evidence="3 10">
    <original>C</original>
    <variation>S</variation>
    <location>
        <position position="234"/>
    </location>
</feature>
<feature type="mutagenesis site" description="Decreases interaction with ATG8." evidence="21">
    <original>W</original>
    <variation>A</variation>
    <location>
        <position position="270"/>
    </location>
</feature>
<feature type="mutagenesis site" description="Decreases interaction with ATG8." evidence="21">
    <original>D</original>
    <variation>A</variation>
    <location>
        <position position="272"/>
    </location>
</feature>
<feature type="mutagenesis site" description="Decreases interaction with ATG8." evidence="21">
    <original>L</original>
    <variation>A</variation>
    <location>
        <position position="273"/>
    </location>
</feature>
<feature type="helix" evidence="39">
    <location>
        <begin position="22"/>
        <end position="25"/>
    </location>
</feature>
<feature type="helix" evidence="39">
    <location>
        <begin position="30"/>
        <end position="43"/>
    </location>
</feature>
<feature type="strand" evidence="39">
    <location>
        <begin position="47"/>
        <end position="49"/>
    </location>
</feature>
<feature type="helix" evidence="38">
    <location>
        <begin position="64"/>
        <end position="66"/>
    </location>
</feature>
<feature type="strand" evidence="39">
    <location>
        <begin position="69"/>
        <end position="75"/>
    </location>
</feature>
<feature type="turn" evidence="36">
    <location>
        <begin position="80"/>
        <end position="82"/>
    </location>
</feature>
<feature type="helix" evidence="37">
    <location>
        <begin position="135"/>
        <end position="138"/>
    </location>
</feature>
<feature type="strand" evidence="39">
    <location>
        <begin position="167"/>
        <end position="176"/>
    </location>
</feature>
<feature type="turn" evidence="39">
    <location>
        <begin position="177"/>
        <end position="180"/>
    </location>
</feature>
<feature type="strand" evidence="39">
    <location>
        <begin position="181"/>
        <end position="190"/>
    </location>
</feature>
<feature type="helix" evidence="39">
    <location>
        <begin position="198"/>
        <end position="201"/>
    </location>
</feature>
<feature type="helix" evidence="39">
    <location>
        <begin position="202"/>
        <end position="204"/>
    </location>
</feature>
<feature type="helix" evidence="39">
    <location>
        <begin position="207"/>
        <end position="213"/>
    </location>
</feature>
<feature type="strand" evidence="39">
    <location>
        <begin position="214"/>
        <end position="218"/>
    </location>
</feature>
<feature type="strand" evidence="39">
    <location>
        <begin position="222"/>
        <end position="224"/>
    </location>
</feature>
<feature type="strand" evidence="39">
    <location>
        <begin position="227"/>
        <end position="231"/>
    </location>
</feature>
<feature type="helix" evidence="39">
    <location>
        <begin position="236"/>
        <end position="255"/>
    </location>
</feature>
<feature type="helix" evidence="39">
    <location>
        <begin position="283"/>
        <end position="285"/>
    </location>
</feature>
<feature type="helix" evidence="39">
    <location>
        <begin position="286"/>
        <end position="297"/>
    </location>
</feature>
<name>ATG3_YEAST</name>
<keyword id="KW-0002">3D-structure</keyword>
<keyword id="KW-0007">Acetylation</keyword>
<keyword id="KW-0072">Autophagy</keyword>
<keyword id="KW-0963">Cytoplasm</keyword>
<keyword id="KW-0496">Mitochondrion</keyword>
<keyword id="KW-0653">Protein transport</keyword>
<keyword id="KW-1185">Reference proteome</keyword>
<keyword id="KW-0813">Transport</keyword>
<keyword id="KW-0833">Ubl conjugation pathway</keyword>
<evidence type="ECO:0000255" key="1"/>
<evidence type="ECO:0000269" key="2">
    <source>
    </source>
</evidence>
<evidence type="ECO:0000269" key="3">
    <source>
    </source>
</evidence>
<evidence type="ECO:0000269" key="4">
    <source>
    </source>
</evidence>
<evidence type="ECO:0000269" key="5">
    <source>
    </source>
</evidence>
<evidence type="ECO:0000269" key="6">
    <source>
    </source>
</evidence>
<evidence type="ECO:0000269" key="7">
    <source>
    </source>
</evidence>
<evidence type="ECO:0000269" key="8">
    <source>
    </source>
</evidence>
<evidence type="ECO:0000269" key="9">
    <source>
    </source>
</evidence>
<evidence type="ECO:0000269" key="10">
    <source>
    </source>
</evidence>
<evidence type="ECO:0000269" key="11">
    <source>
    </source>
</evidence>
<evidence type="ECO:0000269" key="12">
    <source>
    </source>
</evidence>
<evidence type="ECO:0000269" key="13">
    <source>
    </source>
</evidence>
<evidence type="ECO:0000269" key="14">
    <source>
    </source>
</evidence>
<evidence type="ECO:0000269" key="15">
    <source>
    </source>
</evidence>
<evidence type="ECO:0000269" key="16">
    <source>
    </source>
</evidence>
<evidence type="ECO:0000269" key="17">
    <source>
    </source>
</evidence>
<evidence type="ECO:0000269" key="18">
    <source>
    </source>
</evidence>
<evidence type="ECO:0000269" key="19">
    <source>
    </source>
</evidence>
<evidence type="ECO:0000269" key="20">
    <source>
    </source>
</evidence>
<evidence type="ECO:0000269" key="21">
    <source>
    </source>
</evidence>
<evidence type="ECO:0000269" key="22">
    <source>
    </source>
</evidence>
<evidence type="ECO:0000269" key="23">
    <source>
    </source>
</evidence>
<evidence type="ECO:0000269" key="24">
    <source>
    </source>
</evidence>
<evidence type="ECO:0000269" key="25">
    <source>
    </source>
</evidence>
<evidence type="ECO:0000269" key="26">
    <source>
    </source>
</evidence>
<evidence type="ECO:0000269" key="27">
    <source>
    </source>
</evidence>
<evidence type="ECO:0000269" key="28">
    <source>
    </source>
</evidence>
<evidence type="ECO:0000269" key="29">
    <source>
    </source>
</evidence>
<evidence type="ECO:0000269" key="30">
    <source>
    </source>
</evidence>
<evidence type="ECO:0000269" key="31">
    <source>
    </source>
</evidence>
<evidence type="ECO:0000269" key="32">
    <source>
    </source>
</evidence>
<evidence type="ECO:0000269" key="33">
    <source>
    </source>
</evidence>
<evidence type="ECO:0000269" key="34">
    <source>
    </source>
</evidence>
<evidence type="ECO:0000305" key="35"/>
<evidence type="ECO:0007829" key="36">
    <source>
        <dbReference type="PDB" id="2DYT"/>
    </source>
</evidence>
<evidence type="ECO:0007829" key="37">
    <source>
        <dbReference type="PDB" id="3T7G"/>
    </source>
</evidence>
<evidence type="ECO:0007829" key="38">
    <source>
        <dbReference type="PDB" id="4GSL"/>
    </source>
</evidence>
<evidence type="ECO:0007829" key="39">
    <source>
        <dbReference type="PDB" id="6OJJ"/>
    </source>
</evidence>
<comment type="function">
    <text evidence="2 3 5 6 7 10 11 12 14 15 16 17 19 21 26 27 28 30 32 33 34">E2 conjugating enzyme required for the cytoplasm to vacuole transport (Cvt) and autophagy. Required for selective autophagic degradation of the nucleus (nucleophagy) as well as for mitophagy which contributes to regulate mitochondrial quantity and quality by eliminating the mitochondria to a basal level to fulfill cellular energy requirements and preventing excess ROS production. Responsible for the E2-like covalent binding of phosphatidylethanolamine to the C-terminal Gly of ATG8. The ATG12-ATG5 conjugate plays a role of an E3 and promotes the transfer of ATG8 from ATG3 to phosphatidylethanolamine (PE). This step is required for the membrane association of ATG8. The formation of the ATG8-phosphatidylethanolamine conjugate is essential for autophagy and for the cytoplasm to vacuole transport (Cvt). The ATG8-PE conjugate mediates tethering between adjacent membranes and stimulates membrane hemifusion, leading to expansion of the autophagosomal membrane during autophagy.</text>
</comment>
<comment type="activity regulation">
    <text evidence="30">ATG12-ATG5 induces reorientation of the ATG3 structure, increasing conjugation activity of ATG3.</text>
</comment>
<comment type="subunit">
    <text evidence="3 4 7 11 14 19 21 22 23 24 25 29 30">Monomer. Interacts with ATG8 through an intermediate thioester bond between Cys-234 and the C-terminal Gly of ATG8. Also interacts with the 40 amino acid C-terminal region of the E1-like ATG7 enzyme. Also interacts with the ATG12-ATG5 conjugate.</text>
</comment>
<comment type="interaction">
    <interactant intactId="EBI-3381">
        <id>P40344</id>
    </interactant>
    <interactant intactId="EBI-2677">
        <id>P38862</id>
        <label>ATG7</label>
    </interactant>
    <organismsDiffer>false</organismsDiffer>
    <experiments>10</experiments>
</comment>
<comment type="interaction">
    <interactant intactId="EBI-3381">
        <id>P40344</id>
    </interactant>
    <interactant intactId="EBI-2684">
        <id>P38182</id>
        <label>ATG8</label>
    </interactant>
    <organismsDiffer>false</organismsDiffer>
    <experiments>10</experiments>
</comment>
<comment type="interaction">
    <interactant intactId="EBI-3381">
        <id>P40344</id>
    </interactant>
    <interactant intactId="EBI-373144">
        <id>Q9GZQ8</id>
        <label>MAP1LC3B</label>
    </interactant>
    <organismsDiffer>true</organismsDiffer>
    <experiments>2</experiments>
</comment>
<comment type="subcellular location">
    <subcellularLocation>
        <location evidence="5 8">Cytoplasm</location>
    </subcellularLocation>
    <subcellularLocation>
        <location evidence="31">Mitochondrion</location>
    </subcellularLocation>
    <text evidence="31">Associates with mitochondria following nitrogen starvation in a respiratory carbon source.</text>
</comment>
<comment type="induction">
    <text evidence="13 18">Expression is increased during filamentous growth and controlled by the RSF2 transcription factor.</text>
</comment>
<comment type="domain">
    <text>The N-terminal region (residues 1-7) is involved in phosphatidylethanolamine-binding and is required for ATG8-PE conjugation.</text>
</comment>
<comment type="domain">
    <text>The flexible region (FR) is required for ATG7-binding.</text>
</comment>
<comment type="domain">
    <text>The handle region (HR) contains the ATG8 interaction motif (AIM) and mediates binding to ATG8. It is crucial for the cytoplasm-to-vacuole targeting pathway.</text>
</comment>
<comment type="PTM">
    <text evidence="20 27">Acetylated by NuA4 complex acetyltransferase ESA1 at Lys-19 and Lys-48. Acetylation regulates autophagy by controlling ATG8 interaction and lipidation. Deacetylated by histone deacetylase RPD3.</text>
</comment>
<comment type="miscellaneous">
    <text evidence="9">Present with 3610 molecules/cell in log phase SD medium.</text>
</comment>
<comment type="similarity">
    <text evidence="35">Belongs to the ATG3 family.</text>
</comment>
<organism>
    <name type="scientific">Saccharomyces cerevisiae (strain ATCC 204508 / S288c)</name>
    <name type="common">Baker's yeast</name>
    <dbReference type="NCBI Taxonomy" id="559292"/>
    <lineage>
        <taxon>Eukaryota</taxon>
        <taxon>Fungi</taxon>
        <taxon>Dikarya</taxon>
        <taxon>Ascomycota</taxon>
        <taxon>Saccharomycotina</taxon>
        <taxon>Saccharomycetes</taxon>
        <taxon>Saccharomycetales</taxon>
        <taxon>Saccharomycetaceae</taxon>
        <taxon>Saccharomyces</taxon>
    </lineage>
</organism>
<accession>P40344</accession>
<accession>D6W1I2</accession>
<proteinExistence type="evidence at protein level"/>
<reference key="1">
    <citation type="journal article" date="1997" name="J. Bacteriol.">
        <title>AUT1, a gene essential for autophagocytosis in the yeast Saccharomyces cerevisiae.</title>
        <authorList>
            <person name="Schlumpberger M."/>
            <person name="Schaeffeler E."/>
            <person name="Straub M."/>
            <person name="Bredschneider M."/>
            <person name="Wolf D.H."/>
            <person name="Thumm M."/>
        </authorList>
    </citation>
    <scope>NUCLEOTIDE SEQUENCE [GENOMIC DNA]</scope>
    <scope>FUNCTION</scope>
</reference>
<reference key="2">
    <citation type="journal article" date="1994" name="Yeast">
        <title>Twelve open reading frames revealed in the 23.6 kb segment flanking the centromere on the Saccharomyces cerevisiae chromosome XIV right arm.</title>
        <authorList>
            <person name="Verhasselt P."/>
            <person name="Aert R."/>
            <person name="Voet M."/>
            <person name="Volckaert G."/>
        </authorList>
    </citation>
    <scope>NUCLEOTIDE SEQUENCE [GENOMIC DNA]</scope>
    <source>
        <strain>ATCC 96604 / S288c / FY1679</strain>
    </source>
</reference>
<reference key="3">
    <citation type="journal article" date="1997" name="Nature">
        <title>The nucleotide sequence of Saccharomyces cerevisiae chromosome XIV and its evolutionary implications.</title>
        <authorList>
            <person name="Philippsen P."/>
            <person name="Kleine K."/>
            <person name="Poehlmann R."/>
            <person name="Duesterhoeft A."/>
            <person name="Hamberg K."/>
            <person name="Hegemann J.H."/>
            <person name="Obermaier B."/>
            <person name="Urrestarazu L.A."/>
            <person name="Aert R."/>
            <person name="Albermann K."/>
            <person name="Altmann R."/>
            <person name="Andre B."/>
            <person name="Baladron V."/>
            <person name="Ballesta J.P.G."/>
            <person name="Becam A.-M."/>
            <person name="Beinhauer J.D."/>
            <person name="Boskovic J."/>
            <person name="Buitrago M.J."/>
            <person name="Bussereau F."/>
            <person name="Coster F."/>
            <person name="Crouzet M."/>
            <person name="D'Angelo M."/>
            <person name="Dal Pero F."/>
            <person name="De Antoni A."/>
            <person name="del Rey F."/>
            <person name="Doignon F."/>
            <person name="Domdey H."/>
            <person name="Dubois E."/>
            <person name="Fiedler T.A."/>
            <person name="Fleig U."/>
            <person name="Floeth M."/>
            <person name="Fritz C."/>
            <person name="Gaillardin C."/>
            <person name="Garcia-Cantalejo J.M."/>
            <person name="Glansdorff N."/>
            <person name="Goffeau A."/>
            <person name="Gueldener U."/>
            <person name="Herbert C.J."/>
            <person name="Heumann K."/>
            <person name="Heuss-Neitzel D."/>
            <person name="Hilbert H."/>
            <person name="Hinni K."/>
            <person name="Iraqui Houssaini I."/>
            <person name="Jacquet M."/>
            <person name="Jimenez A."/>
            <person name="Jonniaux J.-L."/>
            <person name="Karpfinger-Hartl L."/>
            <person name="Lanfranchi G."/>
            <person name="Lepingle A."/>
            <person name="Levesque H."/>
            <person name="Lyck R."/>
            <person name="Maftahi M."/>
            <person name="Mallet L."/>
            <person name="Maurer C.T.C."/>
            <person name="Messenguy F."/>
            <person name="Mewes H.-W."/>
            <person name="Moestl D."/>
            <person name="Nasr F."/>
            <person name="Nicaud J.-M."/>
            <person name="Niedenthal R.K."/>
            <person name="Pandolfo D."/>
            <person name="Pierard A."/>
            <person name="Piravandi E."/>
            <person name="Planta R.J."/>
            <person name="Pohl T.M."/>
            <person name="Purnelle B."/>
            <person name="Rebischung C."/>
            <person name="Remacha M.A."/>
            <person name="Revuelta J.L."/>
            <person name="Rinke M."/>
            <person name="Saiz J.E."/>
            <person name="Sartorello F."/>
            <person name="Scherens B."/>
            <person name="Sen-Gupta M."/>
            <person name="Soler-Mira A."/>
            <person name="Urbanus J.H.M."/>
            <person name="Valle G."/>
            <person name="Van Dyck L."/>
            <person name="Verhasselt P."/>
            <person name="Vierendeels F."/>
            <person name="Vissers S."/>
            <person name="Voet M."/>
            <person name="Volckaert G."/>
            <person name="Wach A."/>
            <person name="Wambutt R."/>
            <person name="Wedler H."/>
            <person name="Zollner A."/>
            <person name="Hani J."/>
        </authorList>
    </citation>
    <scope>NUCLEOTIDE SEQUENCE [LARGE SCALE GENOMIC DNA]</scope>
    <source>
        <strain>ATCC 204508 / S288c</strain>
    </source>
</reference>
<reference key="4">
    <citation type="journal article" date="2014" name="G3 (Bethesda)">
        <title>The reference genome sequence of Saccharomyces cerevisiae: Then and now.</title>
        <authorList>
            <person name="Engel S.R."/>
            <person name="Dietrich F.S."/>
            <person name="Fisk D.G."/>
            <person name="Binkley G."/>
            <person name="Balakrishnan R."/>
            <person name="Costanzo M.C."/>
            <person name="Dwight S.S."/>
            <person name="Hitz B.C."/>
            <person name="Karra K."/>
            <person name="Nash R.S."/>
            <person name="Weng S."/>
            <person name="Wong E.D."/>
            <person name="Lloyd P."/>
            <person name="Skrzypek M.S."/>
            <person name="Miyasato S.R."/>
            <person name="Simison M."/>
            <person name="Cherry J.M."/>
        </authorList>
    </citation>
    <scope>GENOME REANNOTATION</scope>
    <source>
        <strain>ATCC 204508 / S288c</strain>
    </source>
</reference>
<reference key="5">
    <citation type="journal article" date="1993" name="FEBS Lett.">
        <title>Isolation and characterization of autophagy-defective mutants of Saccharomyces cerevisiae.</title>
        <authorList>
            <person name="Tsukada M."/>
            <person name="Ohsumi Y."/>
        </authorList>
    </citation>
    <scope>FUNCTION</scope>
</reference>
<reference key="6">
    <citation type="journal article" date="1994" name="FEBS Lett.">
        <title>Isolation of autophagocytosis mutants of Saccharomyces cerevisiae.</title>
        <authorList>
            <person name="Thumm M."/>
            <person name="Egner R."/>
            <person name="Koch B."/>
            <person name="Schlumpberger M."/>
            <person name="Straub M."/>
            <person name="Veenhuis M."/>
            <person name="Wolf D.H."/>
        </authorList>
    </citation>
    <scope>FUNCTION</scope>
</reference>
<reference key="7">
    <citation type="journal article" date="2000" name="J. Cell Sci.">
        <title>The breakdown of autophagic vesicles inside the vacuole depends on Aut4p.</title>
        <authorList>
            <person name="Suriapranata I."/>
            <person name="Epple U.D."/>
            <person name="Bernreuther D."/>
            <person name="Bredschneider M."/>
            <person name="Sovarasteanu K."/>
            <person name="Thumm M."/>
        </authorList>
    </citation>
    <scope>FUNCTION</scope>
</reference>
<reference key="8">
    <citation type="journal article" date="2000" name="Nature">
        <title>A ubiquitin-like system mediates protein lipidation.</title>
        <authorList>
            <person name="Ichimura Y."/>
            <person name="Kirisako T."/>
            <person name="Takao T."/>
            <person name="Satomi Y."/>
            <person name="Shimonishi Y."/>
            <person name="Ishihara N."/>
            <person name="Mizushima N."/>
            <person name="Tanida I."/>
            <person name="Kominami E."/>
            <person name="Ohsumi M."/>
            <person name="Noda T."/>
            <person name="Ohsumi Y."/>
        </authorList>
    </citation>
    <scope>FUNCTION</scope>
    <scope>INTERACTION WITH ATG8</scope>
    <scope>MUTAGENESIS OF CYS-234</scope>
</reference>
<reference key="9">
    <citation type="journal article" date="2001" name="EMBO J.">
        <title>The pre-autophagosomal structure organized by concerted functions of APG genes is essential for autophagosome formation.</title>
        <authorList>
            <person name="Suzuki K."/>
            <person name="Kirisako T."/>
            <person name="Kamada Y."/>
            <person name="Mizushima N."/>
            <person name="Noda T."/>
            <person name="Ohsumi Y."/>
        </authorList>
    </citation>
    <scope>FUNCTION</scope>
</reference>
<reference key="10">
    <citation type="journal article" date="2001" name="J. Biol. Chem.">
        <title>The C-terminal region of an Apg7p/Cvt2p is required for homodimerization and is essential for its E1 activity and E1-E2 complex formation.</title>
        <authorList>
            <person name="Komatsu M."/>
            <person name="Tanida I."/>
            <person name="Ueno T."/>
            <person name="Ohsumi M."/>
            <person name="Ohsumi Y."/>
            <person name="Kominami E."/>
        </authorList>
    </citation>
    <scope>INTERACTION WITH ATG7</scope>
</reference>
<reference key="11">
    <citation type="journal article" date="2001" name="J. Cell Biol.">
        <title>Membrane recruitment of Aut7p in the autophagy and cytoplasm to vacuole targeting pathways requires Aut1p, Aut2p, and the autophagy conjugation complex.</title>
        <authorList>
            <person name="Kim J."/>
            <person name="Huang W.-P."/>
            <person name="Klionsky D.J."/>
        </authorList>
    </citation>
    <scope>FUNCTION</scope>
    <scope>SUBCELLULAR LOCATION</scope>
</reference>
<reference key="12">
    <citation type="journal article" date="2003" name="FEBS Lett.">
        <title>The carboxyl terminal 17 amino acids within Apg7 are essential for Apg8 lipidation, but not for Apg12 conjugation.</title>
        <authorList>
            <person name="Yamazaki-Sato H."/>
            <person name="Tanida I."/>
            <person name="Ueno T."/>
            <person name="Kominami E."/>
        </authorList>
    </citation>
    <scope>FUNCTION</scope>
    <scope>INTERACTION WITH ATG7</scope>
</reference>
<reference key="13">
    <citation type="journal article" date="2003" name="Dev. Cell">
        <title>A unified nomenclature for yeast autophagy-related genes.</title>
        <authorList>
            <person name="Klionsky D.J."/>
            <person name="Cregg J.M."/>
            <person name="Dunn W.A. Jr."/>
            <person name="Emr S.D."/>
            <person name="Sakai Y."/>
            <person name="Sandoval I.V."/>
            <person name="Sibirny A."/>
            <person name="Subramani S."/>
            <person name="Thumm M."/>
            <person name="Veenhuis M."/>
            <person name="Ohsumi Y."/>
        </authorList>
    </citation>
    <scope>NOMENCLATURE</scope>
</reference>
<reference key="14">
    <citation type="journal article" date="2003" name="Nature">
        <title>Global analysis of protein localization in budding yeast.</title>
        <authorList>
            <person name="Huh W.-K."/>
            <person name="Falvo J.V."/>
            <person name="Gerke L.C."/>
            <person name="Carroll A.S."/>
            <person name="Howson R.W."/>
            <person name="Weissman J.S."/>
            <person name="O'Shea E.K."/>
        </authorList>
    </citation>
    <scope>SUBCELLULAR LOCATION [LARGE SCALE ANALYSIS]</scope>
</reference>
<reference key="15">
    <citation type="journal article" date="2003" name="Nature">
        <title>Global analysis of protein expression in yeast.</title>
        <authorList>
            <person name="Ghaemmaghami S."/>
            <person name="Huh W.-K."/>
            <person name="Bower K."/>
            <person name="Howson R.W."/>
            <person name="Belle A."/>
            <person name="Dephoure N."/>
            <person name="O'Shea E.K."/>
            <person name="Weissman J.S."/>
        </authorList>
    </citation>
    <scope>LEVEL OF PROTEIN EXPRESSION [LARGE SCALE ANALYSIS]</scope>
</reference>
<reference key="16">
    <citation type="journal article" date="2004" name="J. Biol. Chem.">
        <title>In vivo and in vitro reconstitution of atg8 conjugation essential for autophagy.</title>
        <authorList>
            <person name="Ichimura Y."/>
            <person name="Imamura Y."/>
            <person name="Emoto K."/>
            <person name="Umeda M."/>
            <person name="Noda T."/>
            <person name="Ohsumi Y."/>
        </authorList>
    </citation>
    <scope>FUNCTION</scope>
    <scope>MUTAGENESIS OF CYS-234</scope>
</reference>
<reference key="17">
    <citation type="journal article" date="2006" name="Acta Crystallogr. F">
        <title>Crystallization and preliminary X-ray analysis of Atg3.</title>
        <authorList>
            <person name="Yamada Y."/>
            <person name="Suzuki N.N."/>
            <person name="Fujioka Y."/>
            <person name="Ichimura Y."/>
            <person name="Ohsumi Y."/>
            <person name="Inagaki F."/>
        </authorList>
    </citation>
    <scope>CRYSTALLIZATION</scope>
</reference>
<reference key="18">
    <citation type="journal article" date="2007" name="Cell">
        <title>Atg8, a ubiquitin-like protein required for autophagosome formation, mediates membrane tethering and hemifusion.</title>
        <authorList>
            <person name="Nakatogawa H."/>
            <person name="Ichimura Y."/>
            <person name="Ohsumi Y."/>
        </authorList>
    </citation>
    <scope>FUNCTION</scope>
</reference>
<reference key="19">
    <citation type="journal article" date="2007" name="Genetics">
        <title>An interrelationship between autophagy and filamentous growth in budding yeast.</title>
        <authorList>
            <person name="Ma J."/>
            <person name="Jin R."/>
            <person name="Jia X."/>
            <person name="Dobry C.J."/>
            <person name="Wang L."/>
            <person name="Reggiori F."/>
            <person name="Zhu J."/>
            <person name="Kumar A."/>
        </authorList>
    </citation>
    <scope>INDUCTION</scope>
</reference>
<reference key="20">
    <citation type="journal article" date="2007" name="J. Biol. Chem.">
        <title>The Atg12-Atg5 conjugate has a novel E3-like activity for protein lipidation in autophagy.</title>
        <authorList>
            <person name="Hanada T."/>
            <person name="Noda N.N."/>
            <person name="Satomi Y."/>
            <person name="Ichimura Y."/>
            <person name="Fujioka Y."/>
            <person name="Takao T."/>
            <person name="Inagaki F."/>
            <person name="Ohsumi Y."/>
        </authorList>
    </citation>
    <scope>FUNCTION</scope>
    <scope>INTERACTION WITH THE ATG12-ATG5 CONJUGATE</scope>
</reference>
<reference key="21">
    <citation type="journal article" date="2008" name="J. Biol. Chem.">
        <title>Physiological pH and acidic phospholipids contribute to substrate specificity in lipidation of Atg8.</title>
        <authorList>
            <person name="Oh-oka K."/>
            <person name="Nakatogawa H."/>
            <person name="Ohsumi Y."/>
        </authorList>
    </citation>
    <scope>FUNCTION</scope>
</reference>
<reference key="22">
    <citation type="journal article" date="2008" name="J. Cell Biol.">
        <title>In vivo reconstitution of autophagy in Saccharomyces cerevisiae.</title>
        <authorList>
            <person name="Cao Y."/>
            <person name="Cheong H."/>
            <person name="Song H."/>
            <person name="Klionsky D.J."/>
        </authorList>
    </citation>
    <scope>FUNCTION</scope>
</reference>
<reference key="23">
    <citation type="journal article" date="2008" name="Mol. Biol. Cell">
        <title>Piecemeal microautophagy of the nucleus requires the core macroautophagy genes.</title>
        <authorList>
            <person name="Krick R."/>
            <person name="Muehe Y."/>
            <person name="Prick T."/>
            <person name="Bremer S."/>
            <person name="Schlotterhose P."/>
            <person name="Eskelinen E.L."/>
            <person name="Millen J."/>
            <person name="Goldfarb D.S."/>
            <person name="Thumm M."/>
        </authorList>
    </citation>
    <scope>FUNCTION</scope>
</reference>
<reference key="24">
    <citation type="journal article" date="2009" name="Cell">
        <title>Protein acetylation microarray reveals that NuA4 controls key metabolic target regulating gluconeogenesis.</title>
        <authorList>
            <person name="Lin Y.Y."/>
            <person name="Lu J.Y."/>
            <person name="Zhang J."/>
            <person name="Walter W."/>
            <person name="Dang W."/>
            <person name="Wan J."/>
            <person name="Tao S.C."/>
            <person name="Qian J."/>
            <person name="Zhao Y."/>
            <person name="Boeke J.D."/>
            <person name="Berger S.L."/>
            <person name="Zhu H."/>
        </authorList>
    </citation>
    <scope>ACETYLATION BY THE NUA4 HISTONE ACETYLTRANSFERASE COMPLEX</scope>
</reference>
<reference key="25">
    <citation type="journal article" date="2009" name="FEBS Lett.">
        <title>The amino-terminal region of Atg3 is essential for association with phosphatidylethanolamine in Atg8 lipidation.</title>
        <authorList>
            <person name="Hanada T."/>
            <person name="Satomi Y."/>
            <person name="Takao T."/>
            <person name="Ohsumi Y."/>
        </authorList>
    </citation>
    <scope>FUNCTION</scope>
    <scope>INTERACTION WITH ATG8</scope>
    <scope>LIPIDATION</scope>
    <scope>DOMAIN</scope>
</reference>
<reference key="26">
    <citation type="journal article" date="2009" name="Yeast">
        <title>Rsf1p is required for an efficient metabolic shift from fermentative to glycerol-based respiratory growth in S. cerevisiae.</title>
        <authorList>
            <person name="Roberts G.G. III"/>
            <person name="Hudson A.P."/>
        </authorList>
    </citation>
    <scope>INDUCTION</scope>
</reference>
<reference key="27">
    <citation type="journal article" date="2010" name="J. Biol. Chem.">
        <title>Autophagy-related protein 8 (Atg8) family interacting motif in Atg3 mediates the Atg3-Atg8 interaction and is crucial for the cytoplasm-to-vacuole targeting pathway.</title>
        <authorList>
            <person name="Yamaguchi M."/>
            <person name="Noda N.N."/>
            <person name="Nakatogawa H."/>
            <person name="Kumeta H."/>
            <person name="Ohsumi Y."/>
            <person name="Inagaki F."/>
        </authorList>
    </citation>
    <scope>FUNCTION</scope>
    <scope>INTERACTION WITH ATG8</scope>
    <scope>DOMAIN</scope>
    <scope>MUTAGENESIS OF TRP-270; ASP-272 AND LEU-273</scope>
</reference>
<reference key="28">
    <citation type="journal article" date="2010" name="J. Microbiol. Biotechnol.">
        <title>Purification and characterization of a ubiquitin-like system for autophagosome formation.</title>
        <authorList>
            <person name="Bae J.Y."/>
            <person name="Park H.H."/>
        </authorList>
    </citation>
    <scope>SUBUNIT</scope>
</reference>
<reference key="29">
    <citation type="journal article" date="2011" name="Mol. Cell">
        <title>Structural basis of Atg8 activation by a homodimeric E1, Atg7.</title>
        <authorList>
            <person name="Noda N.N."/>
            <person name="Satoo K."/>
            <person name="Fujioka Y."/>
            <person name="Kumeta H."/>
            <person name="Ogura K."/>
            <person name="Nakatogawa H."/>
            <person name="Ohsumi Y."/>
            <person name="Inagaki F."/>
        </authorList>
    </citation>
    <scope>INTERACTION WITH ATG7 AND ATG8</scope>
</reference>
<reference key="30">
    <citation type="journal article" date="2011" name="Nat. Struct. Mol. Biol.">
        <title>Insights into noncanonical E1 enzyme activation from the structure of autophagic E1 Atg7 with Atg8.</title>
        <authorList>
            <person name="Hong S.B."/>
            <person name="Kim B.W."/>
            <person name="Lee K.E."/>
            <person name="Kim S.W."/>
            <person name="Jeon H."/>
            <person name="Kim J."/>
            <person name="Song H.K."/>
        </authorList>
    </citation>
    <scope>INTERACTION WITH ATG7</scope>
</reference>
<reference key="31">
    <citation type="journal article" date="2012" name="Autophagy">
        <title>Atg4 recycles inappropriately lipidated Atg8 to promote autophagosome biogenesis.</title>
        <authorList>
            <person name="Nakatogawa H."/>
            <person name="Ishii J."/>
            <person name="Asai E."/>
            <person name="Ohsumi Y."/>
        </authorList>
    </citation>
    <scope>FUNCTION</scope>
</reference>
<reference key="32">
    <citation type="journal article" date="2012" name="PLoS ONE">
        <title>A late form of nucleophagy in Saccharomyces cerevisiae.</title>
        <authorList>
            <person name="Mijaljica D."/>
            <person name="Prescott M."/>
            <person name="Devenish R.J."/>
        </authorList>
    </citation>
    <scope>FUNCTION</scope>
</reference>
<reference key="33">
    <citation type="journal article" date="2012" name="Science">
        <title>Function and molecular mechanism of acetylation in autophagy regulation.</title>
        <authorList>
            <person name="Yi C."/>
            <person name="Ma M."/>
            <person name="Ran L."/>
            <person name="Zheng J."/>
            <person name="Tong J."/>
            <person name="Zhu J."/>
            <person name="Ma C."/>
            <person name="Sun Y."/>
            <person name="Zhang S."/>
            <person name="Feng W."/>
            <person name="Zhu L."/>
            <person name="Le Y."/>
            <person name="Gong X."/>
            <person name="Yan X."/>
            <person name="Hong B."/>
            <person name="Jiang F.J."/>
            <person name="Xie Z."/>
            <person name="Miao D."/>
            <person name="Deng H."/>
            <person name="Yu L."/>
        </authorList>
    </citation>
    <scope>ACETYLATION AT LYS-19 AND LYS-48</scope>
    <scope>DEACETYLATION BY RPD3</scope>
    <scope>FUNCTION</scope>
</reference>
<reference key="34">
    <citation type="journal article" date="2013" name="Nat. Struct. Mol. Biol.">
        <title>Atg12-Atg5 conjugate enhances E2 activity of Atg3 by rearranging its catalytic site.</title>
        <authorList>
            <person name="Sakoh-Nakatogawa M."/>
            <person name="Matoba K."/>
            <person name="Asai E."/>
            <person name="Kirisako H."/>
            <person name="Ishii J."/>
            <person name="Noda N.N."/>
            <person name="Inagaki F."/>
            <person name="Nakatogawa H."/>
            <person name="Ohsumi Y."/>
        </authorList>
    </citation>
    <scope>FUNCTION</scope>
    <scope>MUTAGENESIS OF THR-213</scope>
    <scope>INTERACTION WITH THE ATG12-ATG5 CONJUGATE</scope>
    <scope>ACTIVITY REGULATION</scope>
</reference>
<reference key="35">
    <citation type="journal article" date="2019" name="J. Cell Sci.">
        <title>The mitochondrial phosphatidylserine decarboxylase Psd1 is involved in nitrogen starvation-induced mitophagy in yeast.</title>
        <authorList>
            <person name="Vigie P."/>
            <person name="Cougouilles E."/>
            <person name="Bhatia-Kissova I."/>
            <person name="Salin B."/>
            <person name="Blancard C."/>
            <person name="Camougrand N."/>
        </authorList>
    </citation>
    <scope>SUBCELLULAR LOCATION</scope>
</reference>
<reference key="36">
    <citation type="journal article" date="2007" name="J. Biol. Chem.">
        <title>The crystal structure of Atg3, an autophagy-related ubiquitin carrier protein (E2) enzyme that mediates Atg8 lipidation.</title>
        <authorList>
            <person name="Yamada Y."/>
            <person name="Suzuki N.N."/>
            <person name="Hanada T."/>
            <person name="Ichimura Y."/>
            <person name="Kumeta H."/>
            <person name="Fujioka Y."/>
            <person name="Ohsumi Y."/>
            <person name="Inagaki F."/>
        </authorList>
    </citation>
    <scope>X-RAY CRYSTALLOGRAPHY (2.5 ANGSTROMS)</scope>
    <scope>FUNCTION</scope>
    <scope>DOMAIN</scope>
    <scope>INTERACTION WITH ATG7 AND ATG8</scope>
</reference>
<reference key="37">
    <citation type="journal article" date="2011" name="Mol. Cell">
        <title>Atg8 transfer from Atg7 to Atg3: a distinctive E1-E2 architecture and mechanism in the autophagy pathway.</title>
        <authorList>
            <person name="Taherbhoy A.M."/>
            <person name="Tait S.W."/>
            <person name="Kaiser S.E."/>
            <person name="Williams A.H."/>
            <person name="Deng A."/>
            <person name="Nourse A."/>
            <person name="Hammel M."/>
            <person name="Kurinov I."/>
            <person name="Rock C.O."/>
            <person name="Green D.R."/>
            <person name="Schulman B.A."/>
        </authorList>
    </citation>
    <scope>X-RAY CRYSTALLOGRAPHY (2.08 ANGSTROMS) OF 128-144 IN COMPLEX WITH ATG7</scope>
</reference>
<reference key="38">
    <citation type="journal article" date="2012" name="Nat. Struct. Mol. Biol.">
        <title>Noncanonical E2 recruitment by the autophagy E1 revealed by Atg7-Atg3 and Atg7-Atg10 structures.</title>
        <authorList>
            <person name="Kaiser S.E."/>
            <person name="Mao K."/>
            <person name="Taherbhoy A.M."/>
            <person name="Yu S."/>
            <person name="Olszewski J.L."/>
            <person name="Duda D.M."/>
            <person name="Kurinov I."/>
            <person name="Deng A."/>
            <person name="Fenn T.D."/>
            <person name="Klionsky D.J."/>
            <person name="Schulman B.A."/>
        </authorList>
    </citation>
    <scope>X-RAY CRYSTALLOGRAPHY (2.7 ANGSTROMS) IN COMPLEX WITH ATG7</scope>
</reference>